<protein>
    <recommendedName>
        <fullName evidence="1">UPF0291 protein CLB_2550</fullName>
    </recommendedName>
</protein>
<sequence>MDMKKLIERINFLYKKSKEEGLTKEEKVEQQKLRREYTDIIKGNVKVQLEGVEKIPTPNRKN</sequence>
<evidence type="ECO:0000255" key="1">
    <source>
        <dbReference type="HAMAP-Rule" id="MF_01103"/>
    </source>
</evidence>
<dbReference type="EMBL" id="CP000726">
    <property type="protein sequence ID" value="ABS33153.1"/>
    <property type="molecule type" value="Genomic_DNA"/>
</dbReference>
<dbReference type="RefSeq" id="WP_011986921.1">
    <property type="nucleotide sequence ID" value="NC_009697.1"/>
</dbReference>
<dbReference type="SMR" id="A7FWP0"/>
<dbReference type="KEGG" id="cba:CLB_2550"/>
<dbReference type="HOGENOM" id="CLU_173137_3_1_9"/>
<dbReference type="GO" id="GO:0005737">
    <property type="term" value="C:cytoplasm"/>
    <property type="evidence" value="ECO:0007669"/>
    <property type="project" value="UniProtKB-SubCell"/>
</dbReference>
<dbReference type="Gene3D" id="1.10.287.540">
    <property type="entry name" value="Helix hairpin bin"/>
    <property type="match status" value="1"/>
</dbReference>
<dbReference type="HAMAP" id="MF_01103">
    <property type="entry name" value="UPF0291"/>
    <property type="match status" value="1"/>
</dbReference>
<dbReference type="InterPro" id="IPR009242">
    <property type="entry name" value="DUF896"/>
</dbReference>
<dbReference type="PANTHER" id="PTHR37300">
    <property type="entry name" value="UPF0291 PROTEIN CBO2609/CLC_2481"/>
    <property type="match status" value="1"/>
</dbReference>
<dbReference type="PANTHER" id="PTHR37300:SF1">
    <property type="entry name" value="UPF0291 PROTEIN YNZC"/>
    <property type="match status" value="1"/>
</dbReference>
<dbReference type="Pfam" id="PF05979">
    <property type="entry name" value="DUF896"/>
    <property type="match status" value="1"/>
</dbReference>
<dbReference type="SUPFAM" id="SSF158221">
    <property type="entry name" value="YnzC-like"/>
    <property type="match status" value="1"/>
</dbReference>
<comment type="subcellular location">
    <subcellularLocation>
        <location evidence="1">Cytoplasm</location>
    </subcellularLocation>
</comment>
<comment type="similarity">
    <text evidence="1">Belongs to the UPF0291 family.</text>
</comment>
<name>Y2550_CLOB1</name>
<reference key="1">
    <citation type="journal article" date="2007" name="PLoS ONE">
        <title>Analysis of the neurotoxin complex genes in Clostridium botulinum A1-A4 and B1 strains: BoNT/A3, /Ba4 and /B1 clusters are located within plasmids.</title>
        <authorList>
            <person name="Smith T.J."/>
            <person name="Hill K.K."/>
            <person name="Foley B.T."/>
            <person name="Detter J.C."/>
            <person name="Munk A.C."/>
            <person name="Bruce D.C."/>
            <person name="Doggett N.A."/>
            <person name="Smith L.A."/>
            <person name="Marks J.D."/>
            <person name="Xie G."/>
            <person name="Brettin T.S."/>
        </authorList>
    </citation>
    <scope>NUCLEOTIDE SEQUENCE [LARGE SCALE GENOMIC DNA]</scope>
    <source>
        <strain>ATCC 19397 / Type A</strain>
    </source>
</reference>
<proteinExistence type="inferred from homology"/>
<accession>A7FWP0</accession>
<organism>
    <name type="scientific">Clostridium botulinum (strain ATCC 19397 / Type A)</name>
    <dbReference type="NCBI Taxonomy" id="441770"/>
    <lineage>
        <taxon>Bacteria</taxon>
        <taxon>Bacillati</taxon>
        <taxon>Bacillota</taxon>
        <taxon>Clostridia</taxon>
        <taxon>Eubacteriales</taxon>
        <taxon>Clostridiaceae</taxon>
        <taxon>Clostridium</taxon>
    </lineage>
</organism>
<keyword id="KW-0963">Cytoplasm</keyword>
<gene>
    <name type="ordered locus">CLB_2550</name>
</gene>
<feature type="chain" id="PRO_1000065020" description="UPF0291 protein CLB_2550">
    <location>
        <begin position="1"/>
        <end position="62"/>
    </location>
</feature>